<gene>
    <name evidence="1" type="primary">accD</name>
    <name type="ordered locus">SeAg_B2508</name>
</gene>
<evidence type="ECO:0000255" key="1">
    <source>
        <dbReference type="HAMAP-Rule" id="MF_01395"/>
    </source>
</evidence>
<evidence type="ECO:0000255" key="2">
    <source>
        <dbReference type="PROSITE-ProRule" id="PRU01136"/>
    </source>
</evidence>
<evidence type="ECO:0000256" key="3">
    <source>
        <dbReference type="SAM" id="MobiDB-lite"/>
    </source>
</evidence>
<keyword id="KW-0067">ATP-binding</keyword>
<keyword id="KW-0963">Cytoplasm</keyword>
<keyword id="KW-0275">Fatty acid biosynthesis</keyword>
<keyword id="KW-0276">Fatty acid metabolism</keyword>
<keyword id="KW-0444">Lipid biosynthesis</keyword>
<keyword id="KW-0443">Lipid metabolism</keyword>
<keyword id="KW-0479">Metal-binding</keyword>
<keyword id="KW-0547">Nucleotide-binding</keyword>
<keyword id="KW-0808">Transferase</keyword>
<keyword id="KW-0862">Zinc</keyword>
<keyword id="KW-0863">Zinc-finger</keyword>
<name>ACCD_SALA4</name>
<reference key="1">
    <citation type="journal article" date="2011" name="J. Bacteriol.">
        <title>Comparative genomics of 28 Salmonella enterica isolates: evidence for CRISPR-mediated adaptive sublineage evolution.</title>
        <authorList>
            <person name="Fricke W.F."/>
            <person name="Mammel M.K."/>
            <person name="McDermott P.F."/>
            <person name="Tartera C."/>
            <person name="White D.G."/>
            <person name="Leclerc J.E."/>
            <person name="Ravel J."/>
            <person name="Cebula T.A."/>
        </authorList>
    </citation>
    <scope>NUCLEOTIDE SEQUENCE [LARGE SCALE GENOMIC DNA]</scope>
    <source>
        <strain>SL483</strain>
    </source>
</reference>
<organism>
    <name type="scientific">Salmonella agona (strain SL483)</name>
    <dbReference type="NCBI Taxonomy" id="454166"/>
    <lineage>
        <taxon>Bacteria</taxon>
        <taxon>Pseudomonadati</taxon>
        <taxon>Pseudomonadota</taxon>
        <taxon>Gammaproteobacteria</taxon>
        <taxon>Enterobacterales</taxon>
        <taxon>Enterobacteriaceae</taxon>
        <taxon>Salmonella</taxon>
    </lineage>
</organism>
<dbReference type="EC" id="2.1.3.15" evidence="1"/>
<dbReference type="EMBL" id="CP001138">
    <property type="protein sequence ID" value="ACH51600.1"/>
    <property type="molecule type" value="Genomic_DNA"/>
</dbReference>
<dbReference type="RefSeq" id="WP_000118383.1">
    <property type="nucleotide sequence ID" value="NC_011149.1"/>
</dbReference>
<dbReference type="SMR" id="B5EZQ0"/>
<dbReference type="KEGG" id="sea:SeAg_B2508"/>
<dbReference type="HOGENOM" id="CLU_015486_1_0_6"/>
<dbReference type="UniPathway" id="UPA00655">
    <property type="reaction ID" value="UER00711"/>
</dbReference>
<dbReference type="Proteomes" id="UP000008819">
    <property type="component" value="Chromosome"/>
</dbReference>
<dbReference type="GO" id="GO:0009329">
    <property type="term" value="C:acetate CoA-transferase complex"/>
    <property type="evidence" value="ECO:0007669"/>
    <property type="project" value="TreeGrafter"/>
</dbReference>
<dbReference type="GO" id="GO:0003989">
    <property type="term" value="F:acetyl-CoA carboxylase activity"/>
    <property type="evidence" value="ECO:0007669"/>
    <property type="project" value="InterPro"/>
</dbReference>
<dbReference type="GO" id="GO:0005524">
    <property type="term" value="F:ATP binding"/>
    <property type="evidence" value="ECO:0007669"/>
    <property type="project" value="UniProtKB-KW"/>
</dbReference>
<dbReference type="GO" id="GO:0016743">
    <property type="term" value="F:carboxyl- or carbamoyltransferase activity"/>
    <property type="evidence" value="ECO:0007669"/>
    <property type="project" value="UniProtKB-UniRule"/>
</dbReference>
<dbReference type="GO" id="GO:0008270">
    <property type="term" value="F:zinc ion binding"/>
    <property type="evidence" value="ECO:0007669"/>
    <property type="project" value="UniProtKB-UniRule"/>
</dbReference>
<dbReference type="GO" id="GO:0006633">
    <property type="term" value="P:fatty acid biosynthetic process"/>
    <property type="evidence" value="ECO:0007669"/>
    <property type="project" value="UniProtKB-KW"/>
</dbReference>
<dbReference type="GO" id="GO:2001295">
    <property type="term" value="P:malonyl-CoA biosynthetic process"/>
    <property type="evidence" value="ECO:0007669"/>
    <property type="project" value="UniProtKB-UniRule"/>
</dbReference>
<dbReference type="FunFam" id="3.90.226.10:FF:000013">
    <property type="entry name" value="Acetyl-coenzyme A carboxylase carboxyl transferase subunit beta"/>
    <property type="match status" value="1"/>
</dbReference>
<dbReference type="Gene3D" id="3.90.226.10">
    <property type="entry name" value="2-enoyl-CoA Hydratase, Chain A, domain 1"/>
    <property type="match status" value="1"/>
</dbReference>
<dbReference type="HAMAP" id="MF_01395">
    <property type="entry name" value="AcetylCoA_CT_beta"/>
    <property type="match status" value="1"/>
</dbReference>
<dbReference type="InterPro" id="IPR034733">
    <property type="entry name" value="AcCoA_carboxyl_beta"/>
</dbReference>
<dbReference type="InterPro" id="IPR000438">
    <property type="entry name" value="Acetyl_CoA_COase_Trfase_b_su"/>
</dbReference>
<dbReference type="InterPro" id="IPR029045">
    <property type="entry name" value="ClpP/crotonase-like_dom_sf"/>
</dbReference>
<dbReference type="InterPro" id="IPR011762">
    <property type="entry name" value="COA_CT_N"/>
</dbReference>
<dbReference type="InterPro" id="IPR041010">
    <property type="entry name" value="Znf-ACC"/>
</dbReference>
<dbReference type="NCBIfam" id="TIGR00515">
    <property type="entry name" value="accD"/>
    <property type="match status" value="1"/>
</dbReference>
<dbReference type="PANTHER" id="PTHR42995">
    <property type="entry name" value="ACETYL-COENZYME A CARBOXYLASE CARBOXYL TRANSFERASE SUBUNIT BETA, CHLOROPLASTIC"/>
    <property type="match status" value="1"/>
</dbReference>
<dbReference type="PANTHER" id="PTHR42995:SF5">
    <property type="entry name" value="ACETYL-COENZYME A CARBOXYLASE CARBOXYL TRANSFERASE SUBUNIT BETA, CHLOROPLASTIC"/>
    <property type="match status" value="1"/>
</dbReference>
<dbReference type="Pfam" id="PF01039">
    <property type="entry name" value="Carboxyl_trans"/>
    <property type="match status" value="1"/>
</dbReference>
<dbReference type="Pfam" id="PF17848">
    <property type="entry name" value="Zn_ribbon_ACC"/>
    <property type="match status" value="1"/>
</dbReference>
<dbReference type="PRINTS" id="PR01070">
    <property type="entry name" value="ACCCTRFRASEB"/>
</dbReference>
<dbReference type="SUPFAM" id="SSF52096">
    <property type="entry name" value="ClpP/crotonase"/>
    <property type="match status" value="1"/>
</dbReference>
<dbReference type="PROSITE" id="PS50980">
    <property type="entry name" value="COA_CT_NTER"/>
    <property type="match status" value="1"/>
</dbReference>
<protein>
    <recommendedName>
        <fullName evidence="1">Acetyl-coenzyme A carboxylase carboxyl transferase subunit beta</fullName>
        <shortName evidence="1">ACCase subunit beta</shortName>
        <shortName evidence="1">Acetyl-CoA carboxylase carboxyltransferase subunit beta</shortName>
        <ecNumber evidence="1">2.1.3.15</ecNumber>
    </recommendedName>
</protein>
<accession>B5EZQ0</accession>
<sequence>MSWIERIKSNITPTRKASIPEGVWTKCDSCGQVLYRAELERNLEVCPKCDHHMRMSARNRLHSLLDEGSLVELGSELEPKDVLKFRDSKKYKDRLASAQKETGEKDALVVMKGTLHGMPVVAAAFEFAFMGGSMGSVVGARFVRAVEQALEDNCPLVCFSASGGARMQEALMSLMQMAKTSAALAKMQERGLPYISVLTDPTMGGVSASFAMLGDLNIAEPKALIGFAGPRVIEQTVREKLPPGFQRSEFLIEKGAIDMIVRRPEMRLKLASILAKLMNLPAPNPDAPREGVVVPPAPDQESEA</sequence>
<proteinExistence type="inferred from homology"/>
<comment type="function">
    <text evidence="1">Component of the acetyl coenzyme A carboxylase (ACC) complex. Biotin carboxylase (BC) catalyzes the carboxylation of biotin on its carrier protein (BCCP) and then the CO(2) group is transferred by the transcarboxylase to acetyl-CoA to form malonyl-CoA.</text>
</comment>
<comment type="catalytic activity">
    <reaction evidence="1">
        <text>N(6)-carboxybiotinyl-L-lysyl-[protein] + acetyl-CoA = N(6)-biotinyl-L-lysyl-[protein] + malonyl-CoA</text>
        <dbReference type="Rhea" id="RHEA:54728"/>
        <dbReference type="Rhea" id="RHEA-COMP:10505"/>
        <dbReference type="Rhea" id="RHEA-COMP:10506"/>
        <dbReference type="ChEBI" id="CHEBI:57288"/>
        <dbReference type="ChEBI" id="CHEBI:57384"/>
        <dbReference type="ChEBI" id="CHEBI:83144"/>
        <dbReference type="ChEBI" id="CHEBI:83145"/>
        <dbReference type="EC" id="2.1.3.15"/>
    </reaction>
</comment>
<comment type="cofactor">
    <cofactor evidence="1">
        <name>Zn(2+)</name>
        <dbReference type="ChEBI" id="CHEBI:29105"/>
    </cofactor>
    <text evidence="1">Binds 1 zinc ion per subunit.</text>
</comment>
<comment type="pathway">
    <text evidence="1">Lipid metabolism; malonyl-CoA biosynthesis; malonyl-CoA from acetyl-CoA: step 1/1.</text>
</comment>
<comment type="subunit">
    <text evidence="1">Acetyl-CoA carboxylase is a heterohexamer composed of biotin carboxyl carrier protein (AccB), biotin carboxylase (AccC) and two subunits each of ACCase subunit alpha (AccA) and ACCase subunit beta (AccD).</text>
</comment>
<comment type="subcellular location">
    <subcellularLocation>
        <location evidence="1">Cytoplasm</location>
    </subcellularLocation>
</comment>
<comment type="similarity">
    <text evidence="1">Belongs to the AccD/PCCB family.</text>
</comment>
<feature type="chain" id="PRO_0000359048" description="Acetyl-coenzyme A carboxylase carboxyl transferase subunit beta">
    <location>
        <begin position="1"/>
        <end position="304"/>
    </location>
</feature>
<feature type="domain" description="CoA carboxyltransferase N-terminal" evidence="2">
    <location>
        <begin position="23"/>
        <end position="292"/>
    </location>
</feature>
<feature type="zinc finger region" description="C4-type" evidence="1">
    <location>
        <begin position="27"/>
        <end position="49"/>
    </location>
</feature>
<feature type="region of interest" description="Disordered" evidence="3">
    <location>
        <begin position="283"/>
        <end position="304"/>
    </location>
</feature>
<feature type="binding site" evidence="1">
    <location>
        <position position="27"/>
    </location>
    <ligand>
        <name>Zn(2+)</name>
        <dbReference type="ChEBI" id="CHEBI:29105"/>
    </ligand>
</feature>
<feature type="binding site" evidence="1">
    <location>
        <position position="30"/>
    </location>
    <ligand>
        <name>Zn(2+)</name>
        <dbReference type="ChEBI" id="CHEBI:29105"/>
    </ligand>
</feature>
<feature type="binding site" evidence="1">
    <location>
        <position position="46"/>
    </location>
    <ligand>
        <name>Zn(2+)</name>
        <dbReference type="ChEBI" id="CHEBI:29105"/>
    </ligand>
</feature>
<feature type="binding site" evidence="1">
    <location>
        <position position="49"/>
    </location>
    <ligand>
        <name>Zn(2+)</name>
        <dbReference type="ChEBI" id="CHEBI:29105"/>
    </ligand>
</feature>